<name>T2H2L_HUMAN</name>
<sequence>MDEEPERTKRWEGGYERTWEILKEDESGSLKATIEDILFKAKRKRVFEHHGQVRLGMMRHLYVVVDGSRTMEDQDLKPNRLTCTLKLLEYFVEEYFDQNPISQIGIIVTKSKRAEKLTELSGNPRKHITSLKEAVDMTCHGEPSLYNSLSMAMQTLKHMPGHTSREVLIIFSSLTTCDPSNIYDLIKTLKAAKIRVSVIGLSAEVRVCTVLARETGGTYHVILDESHYKELLTHHLSPPPASSSSECSLIRMGFPQHTIASLSDQDAKPSFSMAHLDGNTEPGLTLGGYFCPQCRAKYCELPVECKICGLTLVSAPHLARSYHHLFPLDAFQEIPLEEYNGERFCYGCQGELKDQHVYVCAVCQNVFCVDCDVFVHDSLHCCPGCIHKIPAPSGV</sequence>
<protein>
    <recommendedName>
        <fullName>General transcription factor IIH subunit 2-like protein</fullName>
    </recommendedName>
    <alternativeName>
        <fullName>General transcription factor IIH polypeptide 2-like protein</fullName>
    </alternativeName>
</protein>
<feature type="chain" id="PRO_0000332132" description="General transcription factor IIH subunit 2-like protein">
    <location>
        <begin position="1"/>
        <end position="395"/>
    </location>
</feature>
<feature type="domain" description="VWFA" evidence="3">
    <location>
        <begin position="60"/>
        <end position="236"/>
    </location>
</feature>
<feature type="zinc finger region" description="C4-type">
    <location>
        <begin position="291"/>
        <end position="308"/>
    </location>
</feature>
<feature type="modified residue" description="Phosphotyrosine" evidence="2">
    <location>
        <position position="95"/>
    </location>
</feature>
<feature type="sequence conflict" description="In Ref. 1; BAF85050." evidence="4" ref="1">
    <original>M</original>
    <variation>I</variation>
    <location>
        <position position="57"/>
    </location>
</feature>
<proteinExistence type="evidence at protein level"/>
<evidence type="ECO:0000250" key="1"/>
<evidence type="ECO:0000250" key="2">
    <source>
        <dbReference type="UniProtKB" id="A0JN27"/>
    </source>
</evidence>
<evidence type="ECO:0000255" key="3">
    <source>
        <dbReference type="PROSITE-ProRule" id="PRU00219"/>
    </source>
</evidence>
<evidence type="ECO:0000305" key="4"/>
<dbReference type="EMBL" id="AK292361">
    <property type="protein sequence ID" value="BAF85050.1"/>
    <property type="molecule type" value="mRNA"/>
</dbReference>
<dbReference type="EMBL" id="AK315282">
    <property type="protein sequence ID" value="BAG37691.1"/>
    <property type="molecule type" value="mRNA"/>
</dbReference>
<dbReference type="EMBL" id="AC147575">
    <property type="status" value="NOT_ANNOTATED_CDS"/>
    <property type="molecule type" value="Genomic_DNA"/>
</dbReference>
<dbReference type="EMBL" id="BC064557">
    <property type="protein sequence ID" value="AAH64557.1"/>
    <property type="molecule type" value="mRNA"/>
</dbReference>
<dbReference type="EMBL" id="BC065021">
    <property type="protein sequence ID" value="AAH65021.1"/>
    <property type="molecule type" value="mRNA"/>
</dbReference>
<dbReference type="EMBL" id="BC105980">
    <property type="protein sequence ID" value="AAI05981.1"/>
    <property type="molecule type" value="mRNA"/>
</dbReference>
<dbReference type="EMBL" id="BC171860">
    <property type="protein sequence ID" value="AAI71860.1"/>
    <property type="molecule type" value="mRNA"/>
</dbReference>
<dbReference type="CCDS" id="CCDS43325.1"/>
<dbReference type="RefSeq" id="NP_001035955.1">
    <property type="nucleotide sequence ID" value="NM_001042490.3"/>
</dbReference>
<dbReference type="RefSeq" id="NP_001092198.1">
    <property type="nucleotide sequence ID" value="NM_001098728.3"/>
</dbReference>
<dbReference type="RefSeq" id="NP_001362927.1">
    <property type="nucleotide sequence ID" value="NM_001375998.1"/>
</dbReference>
<dbReference type="RefSeq" id="NP_001362928.1">
    <property type="nucleotide sequence ID" value="NM_001375999.1"/>
</dbReference>
<dbReference type="RefSeq" id="NP_001362929.1">
    <property type="nucleotide sequence ID" value="NM_001376000.2"/>
</dbReference>
<dbReference type="RefSeq" id="NP_001362930.1">
    <property type="nucleotide sequence ID" value="NM_001376001.1"/>
</dbReference>
<dbReference type="RefSeq" id="XP_005248645.1">
    <property type="nucleotide sequence ID" value="XM_005248588.4"/>
</dbReference>
<dbReference type="RefSeq" id="XP_005248647.1">
    <property type="nucleotide sequence ID" value="XM_005248590.3"/>
</dbReference>
<dbReference type="RefSeq" id="XP_006714751.1">
    <property type="nucleotide sequence ID" value="XM_006714688.3"/>
</dbReference>
<dbReference type="RefSeq" id="XP_047273640.1">
    <property type="nucleotide sequence ID" value="XM_047417684.1"/>
</dbReference>
<dbReference type="RefSeq" id="XP_054189011.1">
    <property type="nucleotide sequence ID" value="XM_054333036.1"/>
</dbReference>
<dbReference type="RefSeq" id="XP_054209368.1">
    <property type="nucleotide sequence ID" value="XM_054353393.1"/>
</dbReference>
<dbReference type="SMR" id="Q6P1K8"/>
<dbReference type="BioGRID" id="608768">
    <property type="interactions" value="50"/>
</dbReference>
<dbReference type="BioGRID" id="610778">
    <property type="interactions" value="21"/>
</dbReference>
<dbReference type="FunCoup" id="Q6P1K8">
    <property type="interactions" value="1439"/>
</dbReference>
<dbReference type="IntAct" id="Q6P1K8">
    <property type="interactions" value="22"/>
</dbReference>
<dbReference type="MINT" id="Q6P1K8"/>
<dbReference type="STRING" id="9606.ENSP00000422907"/>
<dbReference type="GlyGen" id="Q6P1K8">
    <property type="glycosylation" value="1 site, 1 O-linked glycan (1 site)"/>
</dbReference>
<dbReference type="iPTMnet" id="Q6P1K8"/>
<dbReference type="PhosphoSitePlus" id="Q6P1K8"/>
<dbReference type="BioMuta" id="GTF2H2C"/>
<dbReference type="DMDM" id="74737138"/>
<dbReference type="jPOST" id="Q6P1K8"/>
<dbReference type="MassIVE" id="Q6P1K8"/>
<dbReference type="PaxDb" id="9606-ENSP00000422907"/>
<dbReference type="PeptideAtlas" id="Q6P1K8"/>
<dbReference type="ProteomicsDB" id="66842"/>
<dbReference type="Pumba" id="Q6P1K8"/>
<dbReference type="Antibodypedia" id="44086">
    <property type="antibodies" value="117 antibodies from 23 providers"/>
</dbReference>
<dbReference type="DNASU" id="728340"/>
<dbReference type="Ensembl" id="ENST00000380729.8">
    <property type="protein sequence ID" value="ENSP00000370105.3"/>
    <property type="gene ID" value="ENSG00000183474.16"/>
</dbReference>
<dbReference type="Ensembl" id="ENST00000510979.5">
    <property type="protein sequence ID" value="ENSP00000422907.1"/>
    <property type="gene ID" value="ENSG00000183474.16"/>
</dbReference>
<dbReference type="Ensembl" id="ENST00000619699.4">
    <property type="protein sequence ID" value="ENSP00000483148.1"/>
    <property type="gene ID" value="ENSG00000274675.4"/>
</dbReference>
<dbReference type="Ensembl" id="ENST00000621406.5">
    <property type="protein sequence ID" value="ENSP00000480471.1"/>
    <property type="gene ID" value="ENSG00000274675.4"/>
</dbReference>
<dbReference type="GeneID" id="728340"/>
<dbReference type="GeneID" id="730394"/>
<dbReference type="KEGG" id="hsa:728340"/>
<dbReference type="KEGG" id="hsa:730394"/>
<dbReference type="MANE-Select" id="ENST00000380729.8">
    <property type="protein sequence ID" value="ENSP00000370105.3"/>
    <property type="RefSeq nucleotide sequence ID" value="NM_001376000.2"/>
    <property type="RefSeq protein sequence ID" value="NP_001362929.1"/>
</dbReference>
<dbReference type="MANE-Select" id="ENST00000621406.5">
    <property type="protein sequence ID" value="ENSP00000480471.1"/>
    <property type="RefSeq nucleotide sequence ID" value="NM_001354437.3"/>
    <property type="RefSeq protein sequence ID" value="NP_001341366.1"/>
</dbReference>
<dbReference type="UCSC" id="uc003jwy.6">
    <property type="organism name" value="human"/>
</dbReference>
<dbReference type="AGR" id="HGNC:31394"/>
<dbReference type="AGR" id="HGNC:35418"/>
<dbReference type="CTD" id="728340"/>
<dbReference type="CTD" id="730394"/>
<dbReference type="GeneCards" id="GTF2H2C"/>
<dbReference type="GeneCards" id="GTF2H2C_2"/>
<dbReference type="HGNC" id="HGNC:31394">
    <property type="gene designation" value="GTF2H2C"/>
</dbReference>
<dbReference type="HGNC" id="HGNC:35418">
    <property type="gene designation" value="GTF2H2C_2"/>
</dbReference>
<dbReference type="HPA" id="ENSG00000183474">
    <property type="expression patterns" value="Low tissue specificity"/>
</dbReference>
<dbReference type="neXtProt" id="NX_Q6P1K8"/>
<dbReference type="OpenTargets" id="ENSG00000183474"/>
<dbReference type="PharmGKB" id="PA164720349"/>
<dbReference type="VEuPathDB" id="HostDB:ENSG00000183474"/>
<dbReference type="eggNOG" id="KOG2807">
    <property type="taxonomic scope" value="Eukaryota"/>
</dbReference>
<dbReference type="GeneTree" id="ENSGT00490000043395"/>
<dbReference type="HOGENOM" id="CLU_028556_1_0_1"/>
<dbReference type="InParanoid" id="Q6P1K8"/>
<dbReference type="OMA" id="ENTICAC"/>
<dbReference type="OrthoDB" id="284275at2759"/>
<dbReference type="PAN-GO" id="Q6P1K8">
    <property type="GO annotations" value="3 GO annotations based on evolutionary models"/>
</dbReference>
<dbReference type="PhylomeDB" id="Q6P1K8"/>
<dbReference type="TreeFam" id="TF314037"/>
<dbReference type="PathwayCommons" id="Q6P1K8"/>
<dbReference type="SignaLink" id="Q6P1K8"/>
<dbReference type="SIGNOR" id="Q6P1K8"/>
<dbReference type="BioGRID-ORCS" id="728340">
    <property type="hits" value="610 hits in 1025 CRISPR screens"/>
</dbReference>
<dbReference type="BioGRID-ORCS" id="730394">
    <property type="hits" value="23 hits in 138 CRISPR screens"/>
</dbReference>
<dbReference type="ChiTaRS" id="GTF2H2C">
    <property type="organism name" value="human"/>
</dbReference>
<dbReference type="Pharos" id="Q6P1K8">
    <property type="development level" value="Tdark"/>
</dbReference>
<dbReference type="PRO" id="PR:Q6P1K8"/>
<dbReference type="Proteomes" id="UP000005640">
    <property type="component" value="Chromosome 5"/>
</dbReference>
<dbReference type="RNAct" id="Q6P1K8">
    <property type="molecule type" value="protein"/>
</dbReference>
<dbReference type="Bgee" id="ENSG00000183474">
    <property type="expression patterns" value="Expressed in calcaneal tendon and 193 other cell types or tissues"/>
</dbReference>
<dbReference type="ExpressionAtlas" id="Q6P1K8">
    <property type="expression patterns" value="baseline and differential"/>
</dbReference>
<dbReference type="GO" id="GO:0016607">
    <property type="term" value="C:nuclear speck"/>
    <property type="evidence" value="ECO:0000314"/>
    <property type="project" value="HPA"/>
</dbReference>
<dbReference type="GO" id="GO:0000439">
    <property type="term" value="C:transcription factor TFIIH core complex"/>
    <property type="evidence" value="ECO:0007669"/>
    <property type="project" value="InterPro"/>
</dbReference>
<dbReference type="GO" id="GO:0005675">
    <property type="term" value="C:transcription factor TFIIH holo complex"/>
    <property type="evidence" value="ECO:0000318"/>
    <property type="project" value="GO_Central"/>
</dbReference>
<dbReference type="GO" id="GO:0008270">
    <property type="term" value="F:zinc ion binding"/>
    <property type="evidence" value="ECO:0007669"/>
    <property type="project" value="UniProtKB-KW"/>
</dbReference>
<dbReference type="GO" id="GO:0006351">
    <property type="term" value="P:DNA-templated transcription"/>
    <property type="evidence" value="ECO:0007669"/>
    <property type="project" value="InterPro"/>
</dbReference>
<dbReference type="GO" id="GO:0006289">
    <property type="term" value="P:nucleotide-excision repair"/>
    <property type="evidence" value="ECO:0000318"/>
    <property type="project" value="GO_Central"/>
</dbReference>
<dbReference type="GO" id="GO:0006357">
    <property type="term" value="P:regulation of transcription by RNA polymerase II"/>
    <property type="evidence" value="ECO:0000318"/>
    <property type="project" value="GO_Central"/>
</dbReference>
<dbReference type="CDD" id="cd01453">
    <property type="entry name" value="vWA_transcription_factor_IIH_type"/>
    <property type="match status" value="1"/>
</dbReference>
<dbReference type="FunFam" id="3.30.40.10:FF:000282">
    <property type="entry name" value="General transcription factor IIH subunit"/>
    <property type="match status" value="1"/>
</dbReference>
<dbReference type="FunFam" id="3.40.50.410:FF:000015">
    <property type="entry name" value="General transcription factor IIH subunit 2"/>
    <property type="match status" value="1"/>
</dbReference>
<dbReference type="Gene3D" id="3.40.50.410">
    <property type="entry name" value="von Willebrand factor, type A domain"/>
    <property type="match status" value="1"/>
</dbReference>
<dbReference type="Gene3D" id="3.30.40.10">
    <property type="entry name" value="Zinc/RING finger domain, C3HC4 (zinc finger)"/>
    <property type="match status" value="1"/>
</dbReference>
<dbReference type="InterPro" id="IPR046349">
    <property type="entry name" value="C1-like_sf"/>
</dbReference>
<dbReference type="InterPro" id="IPR007198">
    <property type="entry name" value="Ssl1-like"/>
</dbReference>
<dbReference type="InterPro" id="IPR004595">
    <property type="entry name" value="TFIIH_C1-like_dom"/>
</dbReference>
<dbReference type="InterPro" id="IPR012170">
    <property type="entry name" value="TFIIH_SSL1/p44"/>
</dbReference>
<dbReference type="InterPro" id="IPR002035">
    <property type="entry name" value="VWF_A"/>
</dbReference>
<dbReference type="InterPro" id="IPR036465">
    <property type="entry name" value="vWFA_dom_sf"/>
</dbReference>
<dbReference type="InterPro" id="IPR013087">
    <property type="entry name" value="Znf_C2H2_type"/>
</dbReference>
<dbReference type="InterPro" id="IPR013083">
    <property type="entry name" value="Znf_RING/FYVE/PHD"/>
</dbReference>
<dbReference type="NCBIfam" id="TIGR00622">
    <property type="entry name" value="ssl1"/>
    <property type="match status" value="1"/>
</dbReference>
<dbReference type="PANTHER" id="PTHR12695">
    <property type="entry name" value="GENERAL TRANSCRIPTION FACTOR IIH SUBUNIT 2"/>
    <property type="match status" value="1"/>
</dbReference>
<dbReference type="PANTHER" id="PTHR12695:SF2">
    <property type="entry name" value="GENERAL TRANSCRIPTION FACTOR IIH SUBUNIT 2-RELATED"/>
    <property type="match status" value="1"/>
</dbReference>
<dbReference type="Pfam" id="PF07975">
    <property type="entry name" value="C1_4"/>
    <property type="match status" value="1"/>
</dbReference>
<dbReference type="Pfam" id="PF04056">
    <property type="entry name" value="Ssl1"/>
    <property type="match status" value="1"/>
</dbReference>
<dbReference type="PIRSF" id="PIRSF015919">
    <property type="entry name" value="TFIIH_SSL1"/>
    <property type="match status" value="1"/>
</dbReference>
<dbReference type="SMART" id="SM01047">
    <property type="entry name" value="C1_4"/>
    <property type="match status" value="1"/>
</dbReference>
<dbReference type="SMART" id="SM00327">
    <property type="entry name" value="VWA"/>
    <property type="match status" value="1"/>
</dbReference>
<dbReference type="SUPFAM" id="SSF57889">
    <property type="entry name" value="Cysteine-rich domain"/>
    <property type="match status" value="1"/>
</dbReference>
<dbReference type="SUPFAM" id="SSF53300">
    <property type="entry name" value="vWA-like"/>
    <property type="match status" value="1"/>
</dbReference>
<dbReference type="PROSITE" id="PS50234">
    <property type="entry name" value="VWFA"/>
    <property type="match status" value="1"/>
</dbReference>
<organism>
    <name type="scientific">Homo sapiens</name>
    <name type="common">Human</name>
    <dbReference type="NCBI Taxonomy" id="9606"/>
    <lineage>
        <taxon>Eukaryota</taxon>
        <taxon>Metazoa</taxon>
        <taxon>Chordata</taxon>
        <taxon>Craniata</taxon>
        <taxon>Vertebrata</taxon>
        <taxon>Euteleostomi</taxon>
        <taxon>Mammalia</taxon>
        <taxon>Eutheria</taxon>
        <taxon>Euarchontoglires</taxon>
        <taxon>Primates</taxon>
        <taxon>Haplorrhini</taxon>
        <taxon>Catarrhini</taxon>
        <taxon>Hominidae</taxon>
        <taxon>Homo</taxon>
    </lineage>
</organism>
<reference key="1">
    <citation type="journal article" date="2004" name="Nat. Genet.">
        <title>Complete sequencing and characterization of 21,243 full-length human cDNAs.</title>
        <authorList>
            <person name="Ota T."/>
            <person name="Suzuki Y."/>
            <person name="Nishikawa T."/>
            <person name="Otsuki T."/>
            <person name="Sugiyama T."/>
            <person name="Irie R."/>
            <person name="Wakamatsu A."/>
            <person name="Hayashi K."/>
            <person name="Sato H."/>
            <person name="Nagai K."/>
            <person name="Kimura K."/>
            <person name="Makita H."/>
            <person name="Sekine M."/>
            <person name="Obayashi M."/>
            <person name="Nishi T."/>
            <person name="Shibahara T."/>
            <person name="Tanaka T."/>
            <person name="Ishii S."/>
            <person name="Yamamoto J."/>
            <person name="Saito K."/>
            <person name="Kawai Y."/>
            <person name="Isono Y."/>
            <person name="Nakamura Y."/>
            <person name="Nagahari K."/>
            <person name="Murakami K."/>
            <person name="Yasuda T."/>
            <person name="Iwayanagi T."/>
            <person name="Wagatsuma M."/>
            <person name="Shiratori A."/>
            <person name="Sudo H."/>
            <person name="Hosoiri T."/>
            <person name="Kaku Y."/>
            <person name="Kodaira H."/>
            <person name="Kondo H."/>
            <person name="Sugawara M."/>
            <person name="Takahashi M."/>
            <person name="Kanda K."/>
            <person name="Yokoi T."/>
            <person name="Furuya T."/>
            <person name="Kikkawa E."/>
            <person name="Omura Y."/>
            <person name="Abe K."/>
            <person name="Kamihara K."/>
            <person name="Katsuta N."/>
            <person name="Sato K."/>
            <person name="Tanikawa M."/>
            <person name="Yamazaki M."/>
            <person name="Ninomiya K."/>
            <person name="Ishibashi T."/>
            <person name="Yamashita H."/>
            <person name="Murakawa K."/>
            <person name="Fujimori K."/>
            <person name="Tanai H."/>
            <person name="Kimata M."/>
            <person name="Watanabe M."/>
            <person name="Hiraoka S."/>
            <person name="Chiba Y."/>
            <person name="Ishida S."/>
            <person name="Ono Y."/>
            <person name="Takiguchi S."/>
            <person name="Watanabe S."/>
            <person name="Yosida M."/>
            <person name="Hotuta T."/>
            <person name="Kusano J."/>
            <person name="Kanehori K."/>
            <person name="Takahashi-Fujii A."/>
            <person name="Hara H."/>
            <person name="Tanase T.-O."/>
            <person name="Nomura Y."/>
            <person name="Togiya S."/>
            <person name="Komai F."/>
            <person name="Hara R."/>
            <person name="Takeuchi K."/>
            <person name="Arita M."/>
            <person name="Imose N."/>
            <person name="Musashino K."/>
            <person name="Yuuki H."/>
            <person name="Oshima A."/>
            <person name="Sasaki N."/>
            <person name="Aotsuka S."/>
            <person name="Yoshikawa Y."/>
            <person name="Matsunawa H."/>
            <person name="Ichihara T."/>
            <person name="Shiohata N."/>
            <person name="Sano S."/>
            <person name="Moriya S."/>
            <person name="Momiyama H."/>
            <person name="Satoh N."/>
            <person name="Takami S."/>
            <person name="Terashima Y."/>
            <person name="Suzuki O."/>
            <person name="Nakagawa S."/>
            <person name="Senoh A."/>
            <person name="Mizoguchi H."/>
            <person name="Goto Y."/>
            <person name="Shimizu F."/>
            <person name="Wakebe H."/>
            <person name="Hishigaki H."/>
            <person name="Watanabe T."/>
            <person name="Sugiyama A."/>
            <person name="Takemoto M."/>
            <person name="Kawakami B."/>
            <person name="Yamazaki M."/>
            <person name="Watanabe K."/>
            <person name="Kumagai A."/>
            <person name="Itakura S."/>
            <person name="Fukuzumi Y."/>
            <person name="Fujimori Y."/>
            <person name="Komiyama M."/>
            <person name="Tashiro H."/>
            <person name="Tanigami A."/>
            <person name="Fujiwara T."/>
            <person name="Ono T."/>
            <person name="Yamada K."/>
            <person name="Fujii Y."/>
            <person name="Ozaki K."/>
            <person name="Hirao M."/>
            <person name="Ohmori Y."/>
            <person name="Kawabata A."/>
            <person name="Hikiji T."/>
            <person name="Kobatake N."/>
            <person name="Inagaki H."/>
            <person name="Ikema Y."/>
            <person name="Okamoto S."/>
            <person name="Okitani R."/>
            <person name="Kawakami T."/>
            <person name="Noguchi S."/>
            <person name="Itoh T."/>
            <person name="Shigeta K."/>
            <person name="Senba T."/>
            <person name="Matsumura K."/>
            <person name="Nakajima Y."/>
            <person name="Mizuno T."/>
            <person name="Morinaga M."/>
            <person name="Sasaki M."/>
            <person name="Togashi T."/>
            <person name="Oyama M."/>
            <person name="Hata H."/>
            <person name="Watanabe M."/>
            <person name="Komatsu T."/>
            <person name="Mizushima-Sugano J."/>
            <person name="Satoh T."/>
            <person name="Shirai Y."/>
            <person name="Takahashi Y."/>
            <person name="Nakagawa K."/>
            <person name="Okumura K."/>
            <person name="Nagase T."/>
            <person name="Nomura N."/>
            <person name="Kikuchi H."/>
            <person name="Masuho Y."/>
            <person name="Yamashita R."/>
            <person name="Nakai K."/>
            <person name="Yada T."/>
            <person name="Nakamura Y."/>
            <person name="Ohara O."/>
            <person name="Isogai T."/>
            <person name="Sugano S."/>
        </authorList>
    </citation>
    <scope>NUCLEOTIDE SEQUENCE [LARGE SCALE MRNA]</scope>
    <source>
        <tissue>Stomach</tissue>
        <tissue>Testis</tissue>
    </source>
</reference>
<reference key="2">
    <citation type="journal article" date="2004" name="Nature">
        <title>The DNA sequence and comparative analysis of human chromosome 5.</title>
        <authorList>
            <person name="Schmutz J."/>
            <person name="Martin J."/>
            <person name="Terry A."/>
            <person name="Couronne O."/>
            <person name="Grimwood J."/>
            <person name="Lowry S."/>
            <person name="Gordon L.A."/>
            <person name="Scott D."/>
            <person name="Xie G."/>
            <person name="Huang W."/>
            <person name="Hellsten U."/>
            <person name="Tran-Gyamfi M."/>
            <person name="She X."/>
            <person name="Prabhakar S."/>
            <person name="Aerts A."/>
            <person name="Altherr M."/>
            <person name="Bajorek E."/>
            <person name="Black S."/>
            <person name="Branscomb E."/>
            <person name="Caoile C."/>
            <person name="Challacombe J.F."/>
            <person name="Chan Y.M."/>
            <person name="Denys M."/>
            <person name="Detter J.C."/>
            <person name="Escobar J."/>
            <person name="Flowers D."/>
            <person name="Fotopulos D."/>
            <person name="Glavina T."/>
            <person name="Gomez M."/>
            <person name="Gonzales E."/>
            <person name="Goodstein D."/>
            <person name="Grigoriev I."/>
            <person name="Groza M."/>
            <person name="Hammon N."/>
            <person name="Hawkins T."/>
            <person name="Haydu L."/>
            <person name="Israni S."/>
            <person name="Jett J."/>
            <person name="Kadner K."/>
            <person name="Kimball H."/>
            <person name="Kobayashi A."/>
            <person name="Lopez F."/>
            <person name="Lou Y."/>
            <person name="Martinez D."/>
            <person name="Medina C."/>
            <person name="Morgan J."/>
            <person name="Nandkeshwar R."/>
            <person name="Noonan J.P."/>
            <person name="Pitluck S."/>
            <person name="Pollard M."/>
            <person name="Predki P."/>
            <person name="Priest J."/>
            <person name="Ramirez L."/>
            <person name="Retterer J."/>
            <person name="Rodriguez A."/>
            <person name="Rogers S."/>
            <person name="Salamov A."/>
            <person name="Salazar A."/>
            <person name="Thayer N."/>
            <person name="Tice H."/>
            <person name="Tsai M."/>
            <person name="Ustaszewska A."/>
            <person name="Vo N."/>
            <person name="Wheeler J."/>
            <person name="Wu K."/>
            <person name="Yang J."/>
            <person name="Dickson M."/>
            <person name="Cheng J.-F."/>
            <person name="Eichler E.E."/>
            <person name="Olsen A."/>
            <person name="Pennacchio L.A."/>
            <person name="Rokhsar D.S."/>
            <person name="Richardson P."/>
            <person name="Lucas S.M."/>
            <person name="Myers R.M."/>
            <person name="Rubin E.M."/>
        </authorList>
    </citation>
    <scope>NUCLEOTIDE SEQUENCE [LARGE SCALE GENOMIC DNA]</scope>
</reference>
<reference key="3">
    <citation type="journal article" date="2004" name="Genome Res.">
        <title>The status, quality, and expansion of the NIH full-length cDNA project: the Mammalian Gene Collection (MGC).</title>
        <authorList>
            <consortium name="The MGC Project Team"/>
        </authorList>
    </citation>
    <scope>NUCLEOTIDE SEQUENCE [LARGE SCALE MRNA]</scope>
    <source>
        <tissue>Liver</tissue>
        <tissue>Skin</tissue>
    </source>
</reference>
<reference key="4">
    <citation type="journal article" date="2011" name="BMC Syst. Biol.">
        <title>Initial characterization of the human central proteome.</title>
        <authorList>
            <person name="Burkard T.R."/>
            <person name="Planyavsky M."/>
            <person name="Kaupe I."/>
            <person name="Breitwieser F.P."/>
            <person name="Buerckstuemmer T."/>
            <person name="Bennett K.L."/>
            <person name="Superti-Furga G."/>
            <person name="Colinge J."/>
        </authorList>
    </citation>
    <scope>IDENTIFICATION BY MASS SPECTROMETRY [LARGE SCALE ANALYSIS]</scope>
</reference>
<accession>Q6P1K8</accession>
<accession>A6NED9</accession>
<accession>A8K8J6</accession>
<accession>B2RCU4</accession>
<accession>B7ZW39</accession>
<gene>
    <name type="primary">GTF2H2C</name>
</gene>
<gene>
    <name type="primary">GTF2H2C_2</name>
    <name type="synonym">GTF2H2D</name>
</gene>
<keyword id="KW-0227">DNA damage</keyword>
<keyword id="KW-0234">DNA repair</keyword>
<keyword id="KW-0479">Metal-binding</keyword>
<keyword id="KW-0539">Nucleus</keyword>
<keyword id="KW-0597">Phosphoprotein</keyword>
<keyword id="KW-1267">Proteomics identification</keyword>
<keyword id="KW-1185">Reference proteome</keyword>
<keyword id="KW-0804">Transcription</keyword>
<keyword id="KW-0805">Transcription regulation</keyword>
<keyword id="KW-0862">Zinc</keyword>
<keyword id="KW-0863">Zinc-finger</keyword>
<comment type="function">
    <text evidence="1">Component of the core-TFIIH basal transcription factor involved in nucleotide excision repair (NER) of DNA and, when complexed to CAK, in RNA transcription by RNA polymerase II.</text>
</comment>
<comment type="interaction">
    <interactant intactId="EBI-8469755">
        <id>Q6P1K8</id>
    </interactant>
    <interactant intactId="EBI-948630">
        <id>Q86Y13</id>
        <label>DZIP3</label>
    </interactant>
    <organismsDiffer>false</organismsDiffer>
    <experiments>3</experiments>
</comment>
<comment type="interaction">
    <interactant intactId="EBI-8469755">
        <id>Q6P1K8</id>
    </interactant>
    <interactant intactId="EBI-6380590">
        <id>P18074</id>
        <label>ERCC2</label>
    </interactant>
    <organismsDiffer>false</organismsDiffer>
    <experiments>3</experiments>
</comment>
<comment type="interaction">
    <interactant intactId="EBI-8469755">
        <id>Q6P1K8</id>
    </interactant>
    <interactant intactId="EBI-18138055">
        <id>Q8N2R8</id>
        <label>FAM43A</label>
    </interactant>
    <organismsDiffer>false</organismsDiffer>
    <experiments>3</experiments>
</comment>
<comment type="interaction">
    <interactant intactId="EBI-8469755">
        <id>Q6P1K8</id>
    </interactant>
    <interactant intactId="EBI-6380459">
        <id>Q13889</id>
        <label>GTF2H3</label>
    </interactant>
    <organismsDiffer>false</organismsDiffer>
    <experiments>6</experiments>
</comment>
<comment type="interaction">
    <interactant intactId="EBI-8469755">
        <id>Q6P1K8</id>
    </interactant>
    <interactant intactId="EBI-9257474">
        <id>O00482-2</id>
        <label>NR5A2</label>
    </interactant>
    <organismsDiffer>false</organismsDiffer>
    <experiments>3</experiments>
</comment>
<comment type="interaction">
    <interactant intactId="EBI-8469755">
        <id>Q6P1K8</id>
    </interactant>
    <interactant intactId="EBI-741158">
        <id>Q96HA8</id>
        <label>NTAQ1</label>
    </interactant>
    <organismsDiffer>false</organismsDiffer>
    <experiments>3</experiments>
</comment>
<comment type="subcellular location">
    <subcellularLocation>
        <location evidence="1">Nucleus</location>
    </subcellularLocation>
</comment>
<comment type="similarity">
    <text evidence="4">Belongs to the GTF2H2 family.</text>
</comment>